<feature type="chain" id="PRO_0000282929" description="Spermidine/spermine N(1)-acetyltransferase-like protein 1" evidence="1">
    <location>
        <begin position="1"/>
        <end position="744"/>
    </location>
</feature>
<feature type="domain" description="N-acetyltransferase" evidence="2">
    <location>
        <begin position="578"/>
        <end position="735"/>
    </location>
</feature>
<feature type="region of interest" description="Disordered" evidence="3">
    <location>
        <begin position="1"/>
        <end position="271"/>
    </location>
</feature>
<feature type="region of interest" description="Disordered" evidence="3">
    <location>
        <begin position="399"/>
        <end position="425"/>
    </location>
</feature>
<feature type="region of interest" description="Disordered" evidence="3">
    <location>
        <begin position="485"/>
        <end position="576"/>
    </location>
</feature>
<feature type="compositionally biased region" description="Polar residues" evidence="3">
    <location>
        <begin position="1"/>
        <end position="20"/>
    </location>
</feature>
<feature type="compositionally biased region" description="Polar residues" evidence="3">
    <location>
        <begin position="29"/>
        <end position="50"/>
    </location>
</feature>
<feature type="compositionally biased region" description="Polar residues" evidence="3">
    <location>
        <begin position="59"/>
        <end position="86"/>
    </location>
</feature>
<feature type="compositionally biased region" description="Polar residues" evidence="3">
    <location>
        <begin position="142"/>
        <end position="158"/>
    </location>
</feature>
<feature type="compositionally biased region" description="Polar residues" evidence="3">
    <location>
        <begin position="212"/>
        <end position="230"/>
    </location>
</feature>
<feature type="compositionally biased region" description="Polar residues" evidence="3">
    <location>
        <begin position="248"/>
        <end position="259"/>
    </location>
</feature>
<feature type="compositionally biased region" description="Low complexity" evidence="3">
    <location>
        <begin position="260"/>
        <end position="271"/>
    </location>
</feature>
<feature type="compositionally biased region" description="Polar residues" evidence="3">
    <location>
        <begin position="485"/>
        <end position="509"/>
    </location>
</feature>
<feature type="compositionally biased region" description="Basic and acidic residues" evidence="3">
    <location>
        <begin position="510"/>
        <end position="523"/>
    </location>
</feature>
<feature type="compositionally biased region" description="Polar residues" evidence="3">
    <location>
        <begin position="553"/>
        <end position="569"/>
    </location>
</feature>
<feature type="binding site" evidence="1">
    <location>
        <begin position="601"/>
        <end position="602"/>
    </location>
    <ligand>
        <name>substrate</name>
    </ligand>
</feature>
<feature type="binding site" evidence="1">
    <location>
        <position position="665"/>
    </location>
    <ligand>
        <name>substrate</name>
    </ligand>
</feature>
<feature type="binding site" evidence="1">
    <location>
        <begin position="667"/>
        <end position="669"/>
    </location>
    <ligand>
        <name>acetyl-CoA</name>
        <dbReference type="ChEBI" id="CHEBI:57288"/>
    </ligand>
</feature>
<feature type="binding site" evidence="1">
    <location>
        <begin position="675"/>
        <end position="680"/>
    </location>
    <ligand>
        <name>acetyl-CoA</name>
        <dbReference type="ChEBI" id="CHEBI:57288"/>
    </ligand>
</feature>
<feature type="binding site" evidence="1">
    <location>
        <begin position="699"/>
        <end position="701"/>
    </location>
    <ligand>
        <name>substrate</name>
    </ligand>
</feature>
<feature type="binding site" evidence="1">
    <location>
        <position position="725"/>
    </location>
    <ligand>
        <name>substrate</name>
    </ligand>
</feature>
<feature type="sequence conflict" description="In Ref. 3; BAB29707." evidence="4" ref="3">
    <original>YSM</original>
    <variation>SSL</variation>
    <location>
        <begin position="317"/>
        <end position="319"/>
    </location>
</feature>
<feature type="sequence conflict" description="In Ref. 3; BAB29707." evidence="4" ref="3">
    <original>Q</original>
    <variation>H</variation>
    <location>
        <position position="356"/>
    </location>
</feature>
<feature type="sequence conflict" description="In Ref. 3; BAB29707." evidence="4" ref="3">
    <original>K</original>
    <variation>Q</variation>
    <location>
        <position position="524"/>
    </location>
</feature>
<feature type="sequence conflict" description="In Ref. 3; BAB29707." evidence="4" ref="3">
    <original>D</original>
    <variation>N</variation>
    <location>
        <position position="534"/>
    </location>
</feature>
<proteinExistence type="evidence at transcript level"/>
<keyword id="KW-0012">Acyltransferase</keyword>
<keyword id="KW-1185">Reference proteome</keyword>
<keyword id="KW-0808">Transferase</keyword>
<accession>Q9D5N8</accession>
<accession>B9EHI8</accession>
<name>SATL1_MOUSE</name>
<gene>
    <name type="primary">Satl1</name>
</gene>
<organism>
    <name type="scientific">Mus musculus</name>
    <name type="common">Mouse</name>
    <dbReference type="NCBI Taxonomy" id="10090"/>
    <lineage>
        <taxon>Eukaryota</taxon>
        <taxon>Metazoa</taxon>
        <taxon>Chordata</taxon>
        <taxon>Craniata</taxon>
        <taxon>Vertebrata</taxon>
        <taxon>Euteleostomi</taxon>
        <taxon>Mammalia</taxon>
        <taxon>Eutheria</taxon>
        <taxon>Euarchontoglires</taxon>
        <taxon>Glires</taxon>
        <taxon>Rodentia</taxon>
        <taxon>Myomorpha</taxon>
        <taxon>Muroidea</taxon>
        <taxon>Muridae</taxon>
        <taxon>Murinae</taxon>
        <taxon>Mus</taxon>
        <taxon>Mus</taxon>
    </lineage>
</organism>
<protein>
    <recommendedName>
        <fullName>Spermidine/spermine N(1)-acetyltransferase-like protein 1</fullName>
        <ecNumber>2.3.1.-</ecNumber>
    </recommendedName>
</protein>
<evidence type="ECO:0000250" key="1"/>
<evidence type="ECO:0000255" key="2">
    <source>
        <dbReference type="PROSITE-ProRule" id="PRU00532"/>
    </source>
</evidence>
<evidence type="ECO:0000256" key="3">
    <source>
        <dbReference type="SAM" id="MobiDB-lite"/>
    </source>
</evidence>
<evidence type="ECO:0000305" key="4"/>
<reference key="1">
    <citation type="journal article" date="2009" name="PLoS Biol.">
        <title>Lineage-specific biology revealed by a finished genome assembly of the mouse.</title>
        <authorList>
            <person name="Church D.M."/>
            <person name="Goodstadt L."/>
            <person name="Hillier L.W."/>
            <person name="Zody M.C."/>
            <person name="Goldstein S."/>
            <person name="She X."/>
            <person name="Bult C.J."/>
            <person name="Agarwala R."/>
            <person name="Cherry J.L."/>
            <person name="DiCuccio M."/>
            <person name="Hlavina W."/>
            <person name="Kapustin Y."/>
            <person name="Meric P."/>
            <person name="Maglott D."/>
            <person name="Birtle Z."/>
            <person name="Marques A.C."/>
            <person name="Graves T."/>
            <person name="Zhou S."/>
            <person name="Teague B."/>
            <person name="Potamousis K."/>
            <person name="Churas C."/>
            <person name="Place M."/>
            <person name="Herschleb J."/>
            <person name="Runnheim R."/>
            <person name="Forrest D."/>
            <person name="Amos-Landgraf J."/>
            <person name="Schwartz D.C."/>
            <person name="Cheng Z."/>
            <person name="Lindblad-Toh K."/>
            <person name="Eichler E.E."/>
            <person name="Ponting C.P."/>
        </authorList>
    </citation>
    <scope>NUCLEOTIDE SEQUENCE [LARGE SCALE GENOMIC DNA]</scope>
    <source>
        <strain>C57BL/6J</strain>
    </source>
</reference>
<reference key="2">
    <citation type="journal article" date="2004" name="Genome Res.">
        <title>The status, quality, and expansion of the NIH full-length cDNA project: the Mammalian Gene Collection (MGC).</title>
        <authorList>
            <consortium name="The MGC Project Team"/>
        </authorList>
    </citation>
    <scope>NUCLEOTIDE SEQUENCE [LARGE SCALE MRNA]</scope>
    <source>
        <tissue>Brain</tissue>
    </source>
</reference>
<reference key="3">
    <citation type="journal article" date="2005" name="Science">
        <title>The transcriptional landscape of the mammalian genome.</title>
        <authorList>
            <person name="Carninci P."/>
            <person name="Kasukawa T."/>
            <person name="Katayama S."/>
            <person name="Gough J."/>
            <person name="Frith M.C."/>
            <person name="Maeda N."/>
            <person name="Oyama R."/>
            <person name="Ravasi T."/>
            <person name="Lenhard B."/>
            <person name="Wells C."/>
            <person name="Kodzius R."/>
            <person name="Shimokawa K."/>
            <person name="Bajic V.B."/>
            <person name="Brenner S.E."/>
            <person name="Batalov S."/>
            <person name="Forrest A.R."/>
            <person name="Zavolan M."/>
            <person name="Davis M.J."/>
            <person name="Wilming L.G."/>
            <person name="Aidinis V."/>
            <person name="Allen J.E."/>
            <person name="Ambesi-Impiombato A."/>
            <person name="Apweiler R."/>
            <person name="Aturaliya R.N."/>
            <person name="Bailey T.L."/>
            <person name="Bansal M."/>
            <person name="Baxter L."/>
            <person name="Beisel K.W."/>
            <person name="Bersano T."/>
            <person name="Bono H."/>
            <person name="Chalk A.M."/>
            <person name="Chiu K.P."/>
            <person name="Choudhary V."/>
            <person name="Christoffels A."/>
            <person name="Clutterbuck D.R."/>
            <person name="Crowe M.L."/>
            <person name="Dalla E."/>
            <person name="Dalrymple B.P."/>
            <person name="de Bono B."/>
            <person name="Della Gatta G."/>
            <person name="di Bernardo D."/>
            <person name="Down T."/>
            <person name="Engstrom P."/>
            <person name="Fagiolini M."/>
            <person name="Faulkner G."/>
            <person name="Fletcher C.F."/>
            <person name="Fukushima T."/>
            <person name="Furuno M."/>
            <person name="Futaki S."/>
            <person name="Gariboldi M."/>
            <person name="Georgii-Hemming P."/>
            <person name="Gingeras T.R."/>
            <person name="Gojobori T."/>
            <person name="Green R.E."/>
            <person name="Gustincich S."/>
            <person name="Harbers M."/>
            <person name="Hayashi Y."/>
            <person name="Hensch T.K."/>
            <person name="Hirokawa N."/>
            <person name="Hill D."/>
            <person name="Huminiecki L."/>
            <person name="Iacono M."/>
            <person name="Ikeo K."/>
            <person name="Iwama A."/>
            <person name="Ishikawa T."/>
            <person name="Jakt M."/>
            <person name="Kanapin A."/>
            <person name="Katoh M."/>
            <person name="Kawasawa Y."/>
            <person name="Kelso J."/>
            <person name="Kitamura H."/>
            <person name="Kitano H."/>
            <person name="Kollias G."/>
            <person name="Krishnan S.P."/>
            <person name="Kruger A."/>
            <person name="Kummerfeld S.K."/>
            <person name="Kurochkin I.V."/>
            <person name="Lareau L.F."/>
            <person name="Lazarevic D."/>
            <person name="Lipovich L."/>
            <person name="Liu J."/>
            <person name="Liuni S."/>
            <person name="McWilliam S."/>
            <person name="Madan Babu M."/>
            <person name="Madera M."/>
            <person name="Marchionni L."/>
            <person name="Matsuda H."/>
            <person name="Matsuzawa S."/>
            <person name="Miki H."/>
            <person name="Mignone F."/>
            <person name="Miyake S."/>
            <person name="Morris K."/>
            <person name="Mottagui-Tabar S."/>
            <person name="Mulder N."/>
            <person name="Nakano N."/>
            <person name="Nakauchi H."/>
            <person name="Ng P."/>
            <person name="Nilsson R."/>
            <person name="Nishiguchi S."/>
            <person name="Nishikawa S."/>
            <person name="Nori F."/>
            <person name="Ohara O."/>
            <person name="Okazaki Y."/>
            <person name="Orlando V."/>
            <person name="Pang K.C."/>
            <person name="Pavan W.J."/>
            <person name="Pavesi G."/>
            <person name="Pesole G."/>
            <person name="Petrovsky N."/>
            <person name="Piazza S."/>
            <person name="Reed J."/>
            <person name="Reid J.F."/>
            <person name="Ring B.Z."/>
            <person name="Ringwald M."/>
            <person name="Rost B."/>
            <person name="Ruan Y."/>
            <person name="Salzberg S.L."/>
            <person name="Sandelin A."/>
            <person name="Schneider C."/>
            <person name="Schoenbach C."/>
            <person name="Sekiguchi K."/>
            <person name="Semple C.A."/>
            <person name="Seno S."/>
            <person name="Sessa L."/>
            <person name="Sheng Y."/>
            <person name="Shibata Y."/>
            <person name="Shimada H."/>
            <person name="Shimada K."/>
            <person name="Silva D."/>
            <person name="Sinclair B."/>
            <person name="Sperling S."/>
            <person name="Stupka E."/>
            <person name="Sugiura K."/>
            <person name="Sultana R."/>
            <person name="Takenaka Y."/>
            <person name="Taki K."/>
            <person name="Tammoja K."/>
            <person name="Tan S.L."/>
            <person name="Tang S."/>
            <person name="Taylor M.S."/>
            <person name="Tegner J."/>
            <person name="Teichmann S.A."/>
            <person name="Ueda H.R."/>
            <person name="van Nimwegen E."/>
            <person name="Verardo R."/>
            <person name="Wei C.L."/>
            <person name="Yagi K."/>
            <person name="Yamanishi H."/>
            <person name="Zabarovsky E."/>
            <person name="Zhu S."/>
            <person name="Zimmer A."/>
            <person name="Hide W."/>
            <person name="Bult C."/>
            <person name="Grimmond S.M."/>
            <person name="Teasdale R.D."/>
            <person name="Liu E.T."/>
            <person name="Brusic V."/>
            <person name="Quackenbush J."/>
            <person name="Wahlestedt C."/>
            <person name="Mattick J.S."/>
            <person name="Hume D.A."/>
            <person name="Kai C."/>
            <person name="Sasaki D."/>
            <person name="Tomaru Y."/>
            <person name="Fukuda S."/>
            <person name="Kanamori-Katayama M."/>
            <person name="Suzuki M."/>
            <person name="Aoki J."/>
            <person name="Arakawa T."/>
            <person name="Iida J."/>
            <person name="Imamura K."/>
            <person name="Itoh M."/>
            <person name="Kato T."/>
            <person name="Kawaji H."/>
            <person name="Kawagashira N."/>
            <person name="Kawashima T."/>
            <person name="Kojima M."/>
            <person name="Kondo S."/>
            <person name="Konno H."/>
            <person name="Nakano K."/>
            <person name="Ninomiya N."/>
            <person name="Nishio T."/>
            <person name="Okada M."/>
            <person name="Plessy C."/>
            <person name="Shibata K."/>
            <person name="Shiraki T."/>
            <person name="Suzuki S."/>
            <person name="Tagami M."/>
            <person name="Waki K."/>
            <person name="Watahiki A."/>
            <person name="Okamura-Oho Y."/>
            <person name="Suzuki H."/>
            <person name="Kawai J."/>
            <person name="Hayashizaki Y."/>
        </authorList>
    </citation>
    <scope>NUCLEOTIDE SEQUENCE [LARGE SCALE MRNA] OF 313-744</scope>
    <source>
        <strain>C57BL/6J</strain>
        <tissue>Testis</tissue>
    </source>
</reference>
<dbReference type="EC" id="2.3.1.-"/>
<dbReference type="EMBL" id="AL672033">
    <property type="status" value="NOT_ANNOTATED_CDS"/>
    <property type="molecule type" value="Genomic_DNA"/>
</dbReference>
<dbReference type="EMBL" id="BC138011">
    <property type="protein sequence ID" value="AAI38012.1"/>
    <property type="molecule type" value="mRNA"/>
</dbReference>
<dbReference type="EMBL" id="AK015086">
    <property type="protein sequence ID" value="BAB29707.1"/>
    <property type="status" value="ALT_INIT"/>
    <property type="molecule type" value="mRNA"/>
</dbReference>
<dbReference type="CCDS" id="CCDS53173.1"/>
<dbReference type="RefSeq" id="NP_082931.1">
    <property type="nucleotide sequence ID" value="NM_028655.1"/>
</dbReference>
<dbReference type="SMR" id="Q9D5N8"/>
<dbReference type="FunCoup" id="Q9D5N8">
    <property type="interactions" value="35"/>
</dbReference>
<dbReference type="STRING" id="10090.ENSMUSP00000026601"/>
<dbReference type="iPTMnet" id="Q9D5N8"/>
<dbReference type="PhosphoSitePlus" id="Q9D5N8"/>
<dbReference type="PaxDb" id="10090-ENSMUSP00000026601"/>
<dbReference type="ProteomicsDB" id="256732"/>
<dbReference type="Antibodypedia" id="54033">
    <property type="antibodies" value="59 antibodies from 13 providers"/>
</dbReference>
<dbReference type="Ensembl" id="ENSMUST00000026601.3">
    <property type="protein sequence ID" value="ENSMUSP00000026601.3"/>
    <property type="gene ID" value="ENSMUSG00000025527.10"/>
</dbReference>
<dbReference type="GeneID" id="73809"/>
<dbReference type="KEGG" id="mmu:73809"/>
<dbReference type="UCSC" id="uc009udi.2">
    <property type="organism name" value="mouse"/>
</dbReference>
<dbReference type="AGR" id="MGI:1921059"/>
<dbReference type="CTD" id="340562"/>
<dbReference type="MGI" id="MGI:1921059">
    <property type="gene designation" value="Satl1"/>
</dbReference>
<dbReference type="VEuPathDB" id="HostDB:ENSMUSG00000025527"/>
<dbReference type="eggNOG" id="KOG3216">
    <property type="taxonomic scope" value="Eukaryota"/>
</dbReference>
<dbReference type="GeneTree" id="ENSGT00950000183121"/>
<dbReference type="HOGENOM" id="CLU_432730_0_0_1"/>
<dbReference type="InParanoid" id="Q9D5N8"/>
<dbReference type="OMA" id="GHPGMWQ"/>
<dbReference type="OrthoDB" id="7305308at2759"/>
<dbReference type="PhylomeDB" id="Q9D5N8"/>
<dbReference type="TreeFam" id="TF319736"/>
<dbReference type="BioGRID-ORCS" id="73809">
    <property type="hits" value="0 hits in 78 CRISPR screens"/>
</dbReference>
<dbReference type="PRO" id="PR:Q9D5N8"/>
<dbReference type="Proteomes" id="UP000000589">
    <property type="component" value="Chromosome X"/>
</dbReference>
<dbReference type="RNAct" id="Q9D5N8">
    <property type="molecule type" value="protein"/>
</dbReference>
<dbReference type="Bgee" id="ENSMUSG00000025527">
    <property type="expression patterns" value="Expressed in blastoderm cell in morula and 10 other cell types or tissues"/>
</dbReference>
<dbReference type="ExpressionAtlas" id="Q9D5N8">
    <property type="expression patterns" value="baseline and differential"/>
</dbReference>
<dbReference type="GO" id="GO:0016747">
    <property type="term" value="F:acyltransferase activity, transferring groups other than amino-acyl groups"/>
    <property type="evidence" value="ECO:0007669"/>
    <property type="project" value="InterPro"/>
</dbReference>
<dbReference type="CDD" id="cd04301">
    <property type="entry name" value="NAT_SF"/>
    <property type="match status" value="1"/>
</dbReference>
<dbReference type="FunFam" id="3.40.630.30:FF:000011">
    <property type="entry name" value="Diamine acetyltransferase 1"/>
    <property type="match status" value="1"/>
</dbReference>
<dbReference type="Gene3D" id="3.40.630.30">
    <property type="match status" value="1"/>
</dbReference>
<dbReference type="InterPro" id="IPR016181">
    <property type="entry name" value="Acyl_CoA_acyltransferase"/>
</dbReference>
<dbReference type="InterPro" id="IPR051016">
    <property type="entry name" value="Diverse_Substrate_AcTransf"/>
</dbReference>
<dbReference type="InterPro" id="IPR000182">
    <property type="entry name" value="GNAT_dom"/>
</dbReference>
<dbReference type="PANTHER" id="PTHR10545">
    <property type="entry name" value="DIAMINE N-ACETYLTRANSFERASE"/>
    <property type="match status" value="1"/>
</dbReference>
<dbReference type="PANTHER" id="PTHR10545:SF63">
    <property type="entry name" value="SPERMIDINE_SPERMINE N(1)-ACETYLTRANSFERASE-LIKE PROTEIN 1"/>
    <property type="match status" value="1"/>
</dbReference>
<dbReference type="Pfam" id="PF00583">
    <property type="entry name" value="Acetyltransf_1"/>
    <property type="match status" value="1"/>
</dbReference>
<dbReference type="SUPFAM" id="SSF55729">
    <property type="entry name" value="Acyl-CoA N-acyltransferases (Nat)"/>
    <property type="match status" value="1"/>
</dbReference>
<dbReference type="PROSITE" id="PS51186">
    <property type="entry name" value="GNAT"/>
    <property type="match status" value="1"/>
</dbReference>
<sequence>MDQPGTYQSGMTQPSVSQPAMSPPGLSPHNMQQPGTSQPYMNQPSMNQPAMNEPGVTIPDSSQSDINQAGQSQPNMKQPWSSTNQPGIYKTDMSQLGMKQPSASQAGMSQAGMWQPGPPTSDMKTINPWQWDPEYSGREPSDTWQITQSNQGTGQSDTVQEDPSCAEQKQPDTWKQDPSFPGMKKTEPWQWESSPPSVRQIDAWKWDPDHPGSNQLNLWQPQLSDSSTRQFDLRQAGPIELGKKESDTWQLVPSQQGKTPSSSGQQDPSQQIVRHAVTWQTGPSPLAKTLSGPWHIGLNQSGMEQLNTCQTGFGQRYSMCQSSGSQSSMKEFHMLQSGSNQPDMNDVDVWQSGTSQPGMHQMDPWQWGHNYSGNTQSGQWTPGPNALVVGQFDSWQPVQPGMKYSESGPWSPRHLDMRQPSPSQLATRQFDKWQQNPSMPGVRQLYTWQPTSSFSDTRQLEKFHPCPINLNMEQFWEAVSRQPGTTQLGTNQLDTNQPDGTQSSQGGKTQSDKLEPSPRKPEMKGSQPDTSQSDSDHLDISQPGPSQLEPGESSMSDLNESQQRITQSPMGKKDSCSFFIRPAEPEDCPDILRLIKELASYEGMEEKVSLTERDLFRDGFGDNPLFYCLVAEAPSEQTESGVKTIGFAMYYFTYDPRIGKLLHLEDFYITEDYQGIGIGADMLKKLSQIAINTECCGMQFLVIIWNQDSVEYYTRLGALDLSCEEGWHLFRFNLDDLLELAEEE</sequence>
<comment type="similarity">
    <text evidence="4">Belongs to the acetyltransferase family.</text>
</comment>
<comment type="sequence caution" evidence="4">
    <conflict type="erroneous initiation">
        <sequence resource="EMBL-CDS" id="BAB29707"/>
    </conflict>
    <text>Truncated N-terminus.</text>
</comment>